<comment type="function">
    <text evidence="2">Transaldolase is important for the balance of metabolites in the pentose-phosphate pathway.</text>
</comment>
<comment type="catalytic activity">
    <reaction evidence="2">
        <text>D-sedoheptulose 7-phosphate + D-glyceraldehyde 3-phosphate = D-erythrose 4-phosphate + beta-D-fructose 6-phosphate</text>
        <dbReference type="Rhea" id="RHEA:17053"/>
        <dbReference type="ChEBI" id="CHEBI:16897"/>
        <dbReference type="ChEBI" id="CHEBI:57483"/>
        <dbReference type="ChEBI" id="CHEBI:57634"/>
        <dbReference type="ChEBI" id="CHEBI:59776"/>
        <dbReference type="EC" id="2.2.1.2"/>
    </reaction>
</comment>
<comment type="pathway">
    <text evidence="2">Carbohydrate degradation; pentose phosphate pathway; D-glyceraldehyde 3-phosphate and beta-D-fructose 6-phosphate from D-ribose 5-phosphate and D-xylulose 5-phosphate (non-oxidative stage): step 2/3.</text>
</comment>
<comment type="subunit">
    <text evidence="1">Homodimer.</text>
</comment>
<comment type="subcellular location">
    <subcellularLocation>
        <location evidence="2">Cytoplasm</location>
    </subcellularLocation>
</comment>
<comment type="similarity">
    <text evidence="2">Belongs to the transaldolase family. Type 1 subfamily.</text>
</comment>
<gene>
    <name evidence="2" type="primary">tal</name>
    <name type="ordered locus">ASA_1186</name>
</gene>
<evidence type="ECO:0000250" key="1"/>
<evidence type="ECO:0000255" key="2">
    <source>
        <dbReference type="HAMAP-Rule" id="MF_00492"/>
    </source>
</evidence>
<accession>A4SK74</accession>
<sequence length="316" mass="34868">MADKLTQLKALTTVVADTGDIEAIKRYQPIDATTNPSLVLKASEIPEYAALIEDAISWAKSQSQDKAQQIIDAGDKLAVNIGLEVLKIVPGRISTEVDARLSFDTEASIAKARKLIRLYNEAGIANDRILIKLASTWEGIRAAEVLEKEGIQCNLTLLFSFAQARACAEAGAFLISPFVGRILDWYKAKHNRDYTPSEDPGVVSVTAIYDYYKQHDYPTVVMGASFRNTGEILELAGCDRLTIGLPLLEELSKTEGAVVRKLNYTGERKAKPTPMSEAEFRWELNQDAMAHEKLGEGIRMFAVDQGKLETMLASRL</sequence>
<organism>
    <name type="scientific">Aeromonas salmonicida (strain A449)</name>
    <dbReference type="NCBI Taxonomy" id="382245"/>
    <lineage>
        <taxon>Bacteria</taxon>
        <taxon>Pseudomonadati</taxon>
        <taxon>Pseudomonadota</taxon>
        <taxon>Gammaproteobacteria</taxon>
        <taxon>Aeromonadales</taxon>
        <taxon>Aeromonadaceae</taxon>
        <taxon>Aeromonas</taxon>
    </lineage>
</organism>
<name>TAL_AERS4</name>
<feature type="chain" id="PRO_1000014483" description="Transaldolase">
    <location>
        <begin position="1"/>
        <end position="316"/>
    </location>
</feature>
<feature type="active site" description="Schiff-base intermediate with substrate" evidence="2">
    <location>
        <position position="132"/>
    </location>
</feature>
<keyword id="KW-0963">Cytoplasm</keyword>
<keyword id="KW-0570">Pentose shunt</keyword>
<keyword id="KW-0704">Schiff base</keyword>
<keyword id="KW-0808">Transferase</keyword>
<reference key="1">
    <citation type="journal article" date="2008" name="BMC Genomics">
        <title>The genome of Aeromonas salmonicida subsp. salmonicida A449: insights into the evolution of a fish pathogen.</title>
        <authorList>
            <person name="Reith M.E."/>
            <person name="Singh R.K."/>
            <person name="Curtis B."/>
            <person name="Boyd J.M."/>
            <person name="Bouevitch A."/>
            <person name="Kimball J."/>
            <person name="Munholland J."/>
            <person name="Murphy C."/>
            <person name="Sarty D."/>
            <person name="Williams J."/>
            <person name="Nash J.H."/>
            <person name="Johnson S.C."/>
            <person name="Brown L.L."/>
        </authorList>
    </citation>
    <scope>NUCLEOTIDE SEQUENCE [LARGE SCALE GENOMIC DNA]</scope>
    <source>
        <strain>A449</strain>
    </source>
</reference>
<protein>
    <recommendedName>
        <fullName evidence="2">Transaldolase</fullName>
        <ecNumber evidence="2">2.2.1.2</ecNumber>
    </recommendedName>
</protein>
<dbReference type="EC" id="2.2.1.2" evidence="2"/>
<dbReference type="EMBL" id="CP000644">
    <property type="protein sequence ID" value="ABO89296.1"/>
    <property type="molecule type" value="Genomic_DNA"/>
</dbReference>
<dbReference type="RefSeq" id="WP_011898466.1">
    <property type="nucleotide sequence ID" value="NC_009348.1"/>
</dbReference>
<dbReference type="SMR" id="A4SK74"/>
<dbReference type="STRING" id="29491.GCA_000820065_00935"/>
<dbReference type="KEGG" id="asa:ASA_1186"/>
<dbReference type="PATRIC" id="fig|382245.13.peg.1178"/>
<dbReference type="eggNOG" id="COG0176">
    <property type="taxonomic scope" value="Bacteria"/>
</dbReference>
<dbReference type="HOGENOM" id="CLU_047470_0_1_6"/>
<dbReference type="UniPathway" id="UPA00115">
    <property type="reaction ID" value="UER00414"/>
</dbReference>
<dbReference type="Proteomes" id="UP000000225">
    <property type="component" value="Chromosome"/>
</dbReference>
<dbReference type="GO" id="GO:0005829">
    <property type="term" value="C:cytosol"/>
    <property type="evidence" value="ECO:0007669"/>
    <property type="project" value="TreeGrafter"/>
</dbReference>
<dbReference type="GO" id="GO:0004801">
    <property type="term" value="F:transaldolase activity"/>
    <property type="evidence" value="ECO:0000250"/>
    <property type="project" value="UniProtKB"/>
</dbReference>
<dbReference type="GO" id="GO:0005975">
    <property type="term" value="P:carbohydrate metabolic process"/>
    <property type="evidence" value="ECO:0007669"/>
    <property type="project" value="InterPro"/>
</dbReference>
<dbReference type="GO" id="GO:0006098">
    <property type="term" value="P:pentose-phosphate shunt"/>
    <property type="evidence" value="ECO:0007669"/>
    <property type="project" value="UniProtKB-UniRule"/>
</dbReference>
<dbReference type="CDD" id="cd00957">
    <property type="entry name" value="Transaldolase_TalAB"/>
    <property type="match status" value="1"/>
</dbReference>
<dbReference type="FunFam" id="3.20.20.70:FF:000002">
    <property type="entry name" value="Transaldolase"/>
    <property type="match status" value="1"/>
</dbReference>
<dbReference type="Gene3D" id="3.20.20.70">
    <property type="entry name" value="Aldolase class I"/>
    <property type="match status" value="1"/>
</dbReference>
<dbReference type="HAMAP" id="MF_00492">
    <property type="entry name" value="Transaldolase_1"/>
    <property type="match status" value="1"/>
</dbReference>
<dbReference type="InterPro" id="IPR013785">
    <property type="entry name" value="Aldolase_TIM"/>
</dbReference>
<dbReference type="InterPro" id="IPR001585">
    <property type="entry name" value="TAL/FSA"/>
</dbReference>
<dbReference type="InterPro" id="IPR004730">
    <property type="entry name" value="Transaldolase_1"/>
</dbReference>
<dbReference type="InterPro" id="IPR018225">
    <property type="entry name" value="Transaldolase_AS"/>
</dbReference>
<dbReference type="NCBIfam" id="NF009001">
    <property type="entry name" value="PRK12346.1"/>
    <property type="match status" value="1"/>
</dbReference>
<dbReference type="NCBIfam" id="TIGR00874">
    <property type="entry name" value="talAB"/>
    <property type="match status" value="1"/>
</dbReference>
<dbReference type="PANTHER" id="PTHR10683">
    <property type="entry name" value="TRANSALDOLASE"/>
    <property type="match status" value="1"/>
</dbReference>
<dbReference type="PANTHER" id="PTHR10683:SF18">
    <property type="entry name" value="TRANSALDOLASE"/>
    <property type="match status" value="1"/>
</dbReference>
<dbReference type="Pfam" id="PF00923">
    <property type="entry name" value="TAL_FSA"/>
    <property type="match status" value="1"/>
</dbReference>
<dbReference type="SUPFAM" id="SSF51569">
    <property type="entry name" value="Aldolase"/>
    <property type="match status" value="1"/>
</dbReference>
<dbReference type="PROSITE" id="PS01054">
    <property type="entry name" value="TRANSALDOLASE_1"/>
    <property type="match status" value="1"/>
</dbReference>
<dbReference type="PROSITE" id="PS00958">
    <property type="entry name" value="TRANSALDOLASE_2"/>
    <property type="match status" value="1"/>
</dbReference>
<proteinExistence type="inferred from homology"/>